<dbReference type="EC" id="2.7.1.23" evidence="1"/>
<dbReference type="EMBL" id="CP000749">
    <property type="protein sequence ID" value="ABR71085.1"/>
    <property type="molecule type" value="Genomic_DNA"/>
</dbReference>
<dbReference type="SMR" id="A6VXA6"/>
<dbReference type="STRING" id="400668.Mmwyl1_2163"/>
<dbReference type="KEGG" id="mmw:Mmwyl1_2163"/>
<dbReference type="eggNOG" id="COG0061">
    <property type="taxonomic scope" value="Bacteria"/>
</dbReference>
<dbReference type="HOGENOM" id="CLU_008831_0_1_6"/>
<dbReference type="OrthoDB" id="9774737at2"/>
<dbReference type="GO" id="GO:0005737">
    <property type="term" value="C:cytoplasm"/>
    <property type="evidence" value="ECO:0007669"/>
    <property type="project" value="UniProtKB-SubCell"/>
</dbReference>
<dbReference type="GO" id="GO:0005524">
    <property type="term" value="F:ATP binding"/>
    <property type="evidence" value="ECO:0007669"/>
    <property type="project" value="UniProtKB-KW"/>
</dbReference>
<dbReference type="GO" id="GO:0046872">
    <property type="term" value="F:metal ion binding"/>
    <property type="evidence" value="ECO:0007669"/>
    <property type="project" value="UniProtKB-UniRule"/>
</dbReference>
<dbReference type="GO" id="GO:0051287">
    <property type="term" value="F:NAD binding"/>
    <property type="evidence" value="ECO:0007669"/>
    <property type="project" value="UniProtKB-ARBA"/>
</dbReference>
<dbReference type="GO" id="GO:0003951">
    <property type="term" value="F:NAD+ kinase activity"/>
    <property type="evidence" value="ECO:0007669"/>
    <property type="project" value="UniProtKB-UniRule"/>
</dbReference>
<dbReference type="GO" id="GO:0019674">
    <property type="term" value="P:NAD metabolic process"/>
    <property type="evidence" value="ECO:0007669"/>
    <property type="project" value="InterPro"/>
</dbReference>
<dbReference type="GO" id="GO:0006741">
    <property type="term" value="P:NADP biosynthetic process"/>
    <property type="evidence" value="ECO:0007669"/>
    <property type="project" value="UniProtKB-UniRule"/>
</dbReference>
<dbReference type="Gene3D" id="3.40.50.10330">
    <property type="entry name" value="Probable inorganic polyphosphate/atp-NAD kinase, domain 1"/>
    <property type="match status" value="1"/>
</dbReference>
<dbReference type="Gene3D" id="2.60.200.30">
    <property type="entry name" value="Probable inorganic polyphosphate/atp-NAD kinase, domain 2"/>
    <property type="match status" value="1"/>
</dbReference>
<dbReference type="HAMAP" id="MF_00361">
    <property type="entry name" value="NAD_kinase"/>
    <property type="match status" value="1"/>
</dbReference>
<dbReference type="InterPro" id="IPR017438">
    <property type="entry name" value="ATP-NAD_kinase_N"/>
</dbReference>
<dbReference type="InterPro" id="IPR017437">
    <property type="entry name" value="ATP-NAD_kinase_PpnK-typ_C"/>
</dbReference>
<dbReference type="InterPro" id="IPR016064">
    <property type="entry name" value="NAD/diacylglycerol_kinase_sf"/>
</dbReference>
<dbReference type="InterPro" id="IPR002504">
    <property type="entry name" value="NADK"/>
</dbReference>
<dbReference type="NCBIfam" id="NF002306">
    <property type="entry name" value="PRK01231.1"/>
    <property type="match status" value="1"/>
</dbReference>
<dbReference type="PANTHER" id="PTHR20275">
    <property type="entry name" value="NAD KINASE"/>
    <property type="match status" value="1"/>
</dbReference>
<dbReference type="PANTHER" id="PTHR20275:SF0">
    <property type="entry name" value="NAD KINASE"/>
    <property type="match status" value="1"/>
</dbReference>
<dbReference type="Pfam" id="PF01513">
    <property type="entry name" value="NAD_kinase"/>
    <property type="match status" value="1"/>
</dbReference>
<dbReference type="Pfam" id="PF20143">
    <property type="entry name" value="NAD_kinase_C"/>
    <property type="match status" value="1"/>
</dbReference>
<dbReference type="SUPFAM" id="SSF111331">
    <property type="entry name" value="NAD kinase/diacylglycerol kinase-like"/>
    <property type="match status" value="1"/>
</dbReference>
<keyword id="KW-0067">ATP-binding</keyword>
<keyword id="KW-0963">Cytoplasm</keyword>
<keyword id="KW-0418">Kinase</keyword>
<keyword id="KW-0520">NAD</keyword>
<keyword id="KW-0521">NADP</keyword>
<keyword id="KW-0547">Nucleotide-binding</keyword>
<keyword id="KW-0808">Transferase</keyword>
<evidence type="ECO:0000255" key="1">
    <source>
        <dbReference type="HAMAP-Rule" id="MF_00361"/>
    </source>
</evidence>
<accession>A6VXA6</accession>
<name>NADK_MARMS</name>
<proteinExistence type="inferred from homology"/>
<protein>
    <recommendedName>
        <fullName evidence="1">NAD kinase</fullName>
        <ecNumber evidence="1">2.7.1.23</ecNumber>
    </recommendedName>
    <alternativeName>
        <fullName evidence="1">ATP-dependent NAD kinase</fullName>
    </alternativeName>
</protein>
<feature type="chain" id="PRO_1000079501" description="NAD kinase">
    <location>
        <begin position="1"/>
        <end position="293"/>
    </location>
</feature>
<feature type="active site" description="Proton acceptor" evidence="1">
    <location>
        <position position="72"/>
    </location>
</feature>
<feature type="binding site" evidence="1">
    <location>
        <begin position="72"/>
        <end position="73"/>
    </location>
    <ligand>
        <name>NAD(+)</name>
        <dbReference type="ChEBI" id="CHEBI:57540"/>
    </ligand>
</feature>
<feature type="binding site" evidence="1">
    <location>
        <begin position="146"/>
        <end position="147"/>
    </location>
    <ligand>
        <name>NAD(+)</name>
        <dbReference type="ChEBI" id="CHEBI:57540"/>
    </ligand>
</feature>
<feature type="binding site" evidence="1">
    <location>
        <position position="157"/>
    </location>
    <ligand>
        <name>NAD(+)</name>
        <dbReference type="ChEBI" id="CHEBI:57540"/>
    </ligand>
</feature>
<feature type="binding site" evidence="1">
    <location>
        <position position="174"/>
    </location>
    <ligand>
        <name>NAD(+)</name>
        <dbReference type="ChEBI" id="CHEBI:57540"/>
    </ligand>
</feature>
<feature type="binding site" evidence="1">
    <location>
        <position position="176"/>
    </location>
    <ligand>
        <name>NAD(+)</name>
        <dbReference type="ChEBI" id="CHEBI:57540"/>
    </ligand>
</feature>
<feature type="binding site" evidence="1">
    <location>
        <begin position="187"/>
        <end position="192"/>
    </location>
    <ligand>
        <name>NAD(+)</name>
        <dbReference type="ChEBI" id="CHEBI:57540"/>
    </ligand>
</feature>
<feature type="binding site" evidence="1">
    <location>
        <position position="247"/>
    </location>
    <ligand>
        <name>NAD(+)</name>
        <dbReference type="ChEBI" id="CHEBI:57540"/>
    </ligand>
</feature>
<reference key="1">
    <citation type="submission" date="2007-06" db="EMBL/GenBank/DDBJ databases">
        <title>Complete sequence of Marinomonas sp. MWYL1.</title>
        <authorList>
            <consortium name="US DOE Joint Genome Institute"/>
            <person name="Copeland A."/>
            <person name="Lucas S."/>
            <person name="Lapidus A."/>
            <person name="Barry K."/>
            <person name="Glavina del Rio T."/>
            <person name="Dalin E."/>
            <person name="Tice H."/>
            <person name="Pitluck S."/>
            <person name="Kiss H."/>
            <person name="Brettin T."/>
            <person name="Bruce D."/>
            <person name="Detter J.C."/>
            <person name="Han C."/>
            <person name="Schmutz J."/>
            <person name="Larimer F."/>
            <person name="Land M."/>
            <person name="Hauser L."/>
            <person name="Kyrpides N."/>
            <person name="Kim E."/>
            <person name="Johnston A.W.B."/>
            <person name="Todd J.D."/>
            <person name="Rogers R."/>
            <person name="Wexler M."/>
            <person name="Bond P.L."/>
            <person name="Li Y."/>
            <person name="Richardson P."/>
        </authorList>
    </citation>
    <scope>NUCLEOTIDE SEQUENCE [LARGE SCALE GENOMIC DNA]</scope>
    <source>
        <strain>MWYL1</strain>
    </source>
</reference>
<organism>
    <name type="scientific">Marinomonas sp. (strain MWYL1)</name>
    <dbReference type="NCBI Taxonomy" id="400668"/>
    <lineage>
        <taxon>Bacteria</taxon>
        <taxon>Pseudomonadati</taxon>
        <taxon>Pseudomonadota</taxon>
        <taxon>Gammaproteobacteria</taxon>
        <taxon>Oceanospirillales</taxon>
        <taxon>Oceanospirillaceae</taxon>
        <taxon>Marinomonas</taxon>
    </lineage>
</organism>
<gene>
    <name evidence="1" type="primary">nadK</name>
    <name type="ordered locus">Mmwyl1_2163</name>
</gene>
<sequence>MSLFRRVGIIARLDKPQILDTVKKLMEYLQEKDIAPVLEDQLATMMPGVKVASSALKELGDHCDMVMVVGGDGSFLGAARAICNYDIPVLGINRGTLGFLTDISPHNLQEELDPIFRGEYHEEKRFMIEAKIKRQNRPSGEGIALNDLVLHPGKSARMIRFDLFIDDQFVMNQKSDGLIVATPTGSTAYALSAGGPIMLPKLDALVLVPMHPHTLSNRPIVIDANARIRIVVCESNLTYPSVSCDGQLNITAAPGDEIHITKKAGGIRLIHPKNHDFYNVCRDKLGWQSSYRP</sequence>
<comment type="function">
    <text evidence="1">Involved in the regulation of the intracellular balance of NAD and NADP, and is a key enzyme in the biosynthesis of NADP. Catalyzes specifically the phosphorylation on 2'-hydroxyl of the adenosine moiety of NAD to yield NADP.</text>
</comment>
<comment type="catalytic activity">
    <reaction evidence="1">
        <text>NAD(+) + ATP = ADP + NADP(+) + H(+)</text>
        <dbReference type="Rhea" id="RHEA:18629"/>
        <dbReference type="ChEBI" id="CHEBI:15378"/>
        <dbReference type="ChEBI" id="CHEBI:30616"/>
        <dbReference type="ChEBI" id="CHEBI:57540"/>
        <dbReference type="ChEBI" id="CHEBI:58349"/>
        <dbReference type="ChEBI" id="CHEBI:456216"/>
        <dbReference type="EC" id="2.7.1.23"/>
    </reaction>
</comment>
<comment type="cofactor">
    <cofactor evidence="1">
        <name>a divalent metal cation</name>
        <dbReference type="ChEBI" id="CHEBI:60240"/>
    </cofactor>
</comment>
<comment type="subcellular location">
    <subcellularLocation>
        <location evidence="1">Cytoplasm</location>
    </subcellularLocation>
</comment>
<comment type="similarity">
    <text evidence="1">Belongs to the NAD kinase family.</text>
</comment>